<protein>
    <recommendedName>
        <fullName evidence="1">Ubiquinone/menaquinone biosynthesis C-methyltransferase UbiE</fullName>
        <ecNumber evidence="1">2.1.1.163</ecNumber>
        <ecNumber evidence="1">2.1.1.201</ecNumber>
    </recommendedName>
    <alternativeName>
        <fullName evidence="1">2-methoxy-6-polyprenyl-1,4-benzoquinol methylase</fullName>
    </alternativeName>
    <alternativeName>
        <fullName evidence="1">Demethylmenaquinone methyltransferase</fullName>
    </alternativeName>
</protein>
<organism>
    <name type="scientific">Idiomarina loihiensis (strain ATCC BAA-735 / DSM 15497 / L2-TR)</name>
    <dbReference type="NCBI Taxonomy" id="283942"/>
    <lineage>
        <taxon>Bacteria</taxon>
        <taxon>Pseudomonadati</taxon>
        <taxon>Pseudomonadota</taxon>
        <taxon>Gammaproteobacteria</taxon>
        <taxon>Alteromonadales</taxon>
        <taxon>Idiomarinaceae</taxon>
        <taxon>Idiomarina</taxon>
    </lineage>
</organism>
<dbReference type="EC" id="2.1.1.163" evidence="1"/>
<dbReference type="EC" id="2.1.1.201" evidence="1"/>
<dbReference type="EMBL" id="AE017340">
    <property type="protein sequence ID" value="AAV83205.1"/>
    <property type="molecule type" value="Genomic_DNA"/>
</dbReference>
<dbReference type="RefSeq" id="WP_011235599.1">
    <property type="nucleotide sequence ID" value="NC_006512.1"/>
</dbReference>
<dbReference type="SMR" id="Q5QYG2"/>
<dbReference type="STRING" id="283942.IL2373"/>
<dbReference type="GeneID" id="41337568"/>
<dbReference type="KEGG" id="ilo:IL2373"/>
<dbReference type="eggNOG" id="COG2226">
    <property type="taxonomic scope" value="Bacteria"/>
</dbReference>
<dbReference type="HOGENOM" id="CLU_037990_0_0_6"/>
<dbReference type="OrthoDB" id="9808140at2"/>
<dbReference type="UniPathway" id="UPA00079">
    <property type="reaction ID" value="UER00169"/>
</dbReference>
<dbReference type="UniPathway" id="UPA00232"/>
<dbReference type="Proteomes" id="UP000001171">
    <property type="component" value="Chromosome"/>
</dbReference>
<dbReference type="GO" id="GO:0008425">
    <property type="term" value="F:2-methoxy-6-polyprenyl-1,4-benzoquinol methyltransferase activity"/>
    <property type="evidence" value="ECO:0007669"/>
    <property type="project" value="UniProtKB-UniRule"/>
</dbReference>
<dbReference type="GO" id="GO:0043770">
    <property type="term" value="F:demethylmenaquinone methyltransferase activity"/>
    <property type="evidence" value="ECO:0007669"/>
    <property type="project" value="UniProtKB-UniRule"/>
</dbReference>
<dbReference type="GO" id="GO:0009060">
    <property type="term" value="P:aerobic respiration"/>
    <property type="evidence" value="ECO:0007669"/>
    <property type="project" value="UniProtKB-UniRule"/>
</dbReference>
<dbReference type="GO" id="GO:0009234">
    <property type="term" value="P:menaquinone biosynthetic process"/>
    <property type="evidence" value="ECO:0007669"/>
    <property type="project" value="UniProtKB-UniRule"/>
</dbReference>
<dbReference type="GO" id="GO:0032259">
    <property type="term" value="P:methylation"/>
    <property type="evidence" value="ECO:0007669"/>
    <property type="project" value="UniProtKB-KW"/>
</dbReference>
<dbReference type="CDD" id="cd02440">
    <property type="entry name" value="AdoMet_MTases"/>
    <property type="match status" value="1"/>
</dbReference>
<dbReference type="FunFam" id="3.40.50.150:FF:000014">
    <property type="entry name" value="Ubiquinone/menaquinone biosynthesis C-methyltransferase UbiE"/>
    <property type="match status" value="1"/>
</dbReference>
<dbReference type="Gene3D" id="3.40.50.150">
    <property type="entry name" value="Vaccinia Virus protein VP39"/>
    <property type="match status" value="1"/>
</dbReference>
<dbReference type="HAMAP" id="MF_01813">
    <property type="entry name" value="MenG_UbiE_methyltr"/>
    <property type="match status" value="1"/>
</dbReference>
<dbReference type="InterPro" id="IPR029063">
    <property type="entry name" value="SAM-dependent_MTases_sf"/>
</dbReference>
<dbReference type="InterPro" id="IPR004033">
    <property type="entry name" value="UbiE/COQ5_MeTrFase"/>
</dbReference>
<dbReference type="InterPro" id="IPR023576">
    <property type="entry name" value="UbiE/COQ5_MeTrFase_CS"/>
</dbReference>
<dbReference type="NCBIfam" id="TIGR01934">
    <property type="entry name" value="MenG_MenH_UbiE"/>
    <property type="match status" value="1"/>
</dbReference>
<dbReference type="NCBIfam" id="NF001240">
    <property type="entry name" value="PRK00216.1-1"/>
    <property type="match status" value="1"/>
</dbReference>
<dbReference type="NCBIfam" id="NF001242">
    <property type="entry name" value="PRK00216.1-3"/>
    <property type="match status" value="1"/>
</dbReference>
<dbReference type="NCBIfam" id="NF001244">
    <property type="entry name" value="PRK00216.1-5"/>
    <property type="match status" value="1"/>
</dbReference>
<dbReference type="PANTHER" id="PTHR43591:SF24">
    <property type="entry name" value="2-METHOXY-6-POLYPRENYL-1,4-BENZOQUINOL METHYLASE, MITOCHONDRIAL"/>
    <property type="match status" value="1"/>
</dbReference>
<dbReference type="PANTHER" id="PTHR43591">
    <property type="entry name" value="METHYLTRANSFERASE"/>
    <property type="match status" value="1"/>
</dbReference>
<dbReference type="Pfam" id="PF01209">
    <property type="entry name" value="Ubie_methyltran"/>
    <property type="match status" value="1"/>
</dbReference>
<dbReference type="SUPFAM" id="SSF53335">
    <property type="entry name" value="S-adenosyl-L-methionine-dependent methyltransferases"/>
    <property type="match status" value="1"/>
</dbReference>
<dbReference type="PROSITE" id="PS51608">
    <property type="entry name" value="SAM_MT_UBIE"/>
    <property type="match status" value="1"/>
</dbReference>
<dbReference type="PROSITE" id="PS01183">
    <property type="entry name" value="UBIE_1"/>
    <property type="match status" value="1"/>
</dbReference>
<dbReference type="PROSITE" id="PS01184">
    <property type="entry name" value="UBIE_2"/>
    <property type="match status" value="1"/>
</dbReference>
<name>UBIE_IDILO</name>
<sequence>MNDKNEESIDFGYQKVARNQKKNLVADVFQSVAAKYDVMNDLMSFGIHRLWKRYTIDCSGVRRGMKVLDIAGGTGDLTAQFSRRVGAEGEVVLADINDAMLKVGRDKLRDRGIIGNVRYVQADAEELPFDDNTFDVITIAFGLRNVTDKDKALRSMLRVLKPGGRVLILEFSKPVSATLNQVYDFYSFNILPKMGQVVANDSDSYQYLAESIRMHPDQETLKSMMEAAGYEKVDYQNMTGGVVALHRGYKF</sequence>
<accession>Q5QYG2</accession>
<reference key="1">
    <citation type="journal article" date="2004" name="Proc. Natl. Acad. Sci. U.S.A.">
        <title>Genome sequence of the deep-sea gamma-proteobacterium Idiomarina loihiensis reveals amino acid fermentation as a source of carbon and energy.</title>
        <authorList>
            <person name="Hou S."/>
            <person name="Saw J.H."/>
            <person name="Lee K.S."/>
            <person name="Freitas T.A."/>
            <person name="Belisle C."/>
            <person name="Kawarabayasi Y."/>
            <person name="Donachie S.P."/>
            <person name="Pikina A."/>
            <person name="Galperin M.Y."/>
            <person name="Koonin E.V."/>
            <person name="Makarova K.S."/>
            <person name="Omelchenko M.V."/>
            <person name="Sorokin A."/>
            <person name="Wolf Y.I."/>
            <person name="Li Q.X."/>
            <person name="Keum Y.S."/>
            <person name="Campbell S."/>
            <person name="Denery J."/>
            <person name="Aizawa S."/>
            <person name="Shibata S."/>
            <person name="Malahoff A."/>
            <person name="Alam M."/>
        </authorList>
    </citation>
    <scope>NUCLEOTIDE SEQUENCE [LARGE SCALE GENOMIC DNA]</scope>
    <source>
        <strain>ATCC BAA-735 / DSM 15497 / L2-TR</strain>
    </source>
</reference>
<comment type="function">
    <text evidence="1">Methyltransferase required for the conversion of demethylmenaquinol (DMKH2) to menaquinol (MKH2) and the conversion of 2-polyprenyl-6-methoxy-1,4-benzoquinol (DDMQH2) to 2-polyprenyl-3-methyl-6-methoxy-1,4-benzoquinol (DMQH2).</text>
</comment>
<comment type="catalytic activity">
    <reaction evidence="1">
        <text>a 2-demethylmenaquinol + S-adenosyl-L-methionine = a menaquinol + S-adenosyl-L-homocysteine + H(+)</text>
        <dbReference type="Rhea" id="RHEA:42640"/>
        <dbReference type="Rhea" id="RHEA-COMP:9539"/>
        <dbReference type="Rhea" id="RHEA-COMP:9563"/>
        <dbReference type="ChEBI" id="CHEBI:15378"/>
        <dbReference type="ChEBI" id="CHEBI:18151"/>
        <dbReference type="ChEBI" id="CHEBI:55437"/>
        <dbReference type="ChEBI" id="CHEBI:57856"/>
        <dbReference type="ChEBI" id="CHEBI:59789"/>
        <dbReference type="EC" id="2.1.1.163"/>
    </reaction>
</comment>
<comment type="catalytic activity">
    <reaction evidence="1">
        <text>a 2-methoxy-6-(all-trans-polyprenyl)benzene-1,4-diol + S-adenosyl-L-methionine = a 5-methoxy-2-methyl-3-(all-trans-polyprenyl)benzene-1,4-diol + S-adenosyl-L-homocysteine + H(+)</text>
        <dbReference type="Rhea" id="RHEA:28286"/>
        <dbReference type="Rhea" id="RHEA-COMP:10858"/>
        <dbReference type="Rhea" id="RHEA-COMP:10859"/>
        <dbReference type="ChEBI" id="CHEBI:15378"/>
        <dbReference type="ChEBI" id="CHEBI:57856"/>
        <dbReference type="ChEBI" id="CHEBI:59789"/>
        <dbReference type="ChEBI" id="CHEBI:84166"/>
        <dbReference type="ChEBI" id="CHEBI:84167"/>
        <dbReference type="EC" id="2.1.1.201"/>
    </reaction>
</comment>
<comment type="pathway">
    <text evidence="1">Quinol/quinone metabolism; menaquinone biosynthesis; menaquinol from 1,4-dihydroxy-2-naphthoate: step 2/2.</text>
</comment>
<comment type="pathway">
    <text evidence="1">Cofactor biosynthesis; ubiquinone biosynthesis.</text>
</comment>
<comment type="similarity">
    <text evidence="1">Belongs to the class I-like SAM-binding methyltransferase superfamily. MenG/UbiE family.</text>
</comment>
<gene>
    <name evidence="1" type="primary">ubiE</name>
    <name type="ordered locus">IL2373</name>
</gene>
<proteinExistence type="inferred from homology"/>
<feature type="chain" id="PRO_0000193282" description="Ubiquinone/menaquinone biosynthesis C-methyltransferase UbiE">
    <location>
        <begin position="1"/>
        <end position="251"/>
    </location>
</feature>
<feature type="binding site" evidence="1">
    <location>
        <position position="74"/>
    </location>
    <ligand>
        <name>S-adenosyl-L-methionine</name>
        <dbReference type="ChEBI" id="CHEBI:59789"/>
    </ligand>
</feature>
<feature type="binding site" evidence="1">
    <location>
        <position position="95"/>
    </location>
    <ligand>
        <name>S-adenosyl-L-methionine</name>
        <dbReference type="ChEBI" id="CHEBI:59789"/>
    </ligand>
</feature>
<feature type="binding site" evidence="1">
    <location>
        <begin position="123"/>
        <end position="124"/>
    </location>
    <ligand>
        <name>S-adenosyl-L-methionine</name>
        <dbReference type="ChEBI" id="CHEBI:59789"/>
    </ligand>
</feature>
<keyword id="KW-0474">Menaquinone biosynthesis</keyword>
<keyword id="KW-0489">Methyltransferase</keyword>
<keyword id="KW-1185">Reference proteome</keyword>
<keyword id="KW-0949">S-adenosyl-L-methionine</keyword>
<keyword id="KW-0808">Transferase</keyword>
<keyword id="KW-0831">Ubiquinone biosynthesis</keyword>
<evidence type="ECO:0000255" key="1">
    <source>
        <dbReference type="HAMAP-Rule" id="MF_01813"/>
    </source>
</evidence>